<proteinExistence type="evidence at protein level"/>
<evidence type="ECO:0000250" key="1"/>
<evidence type="ECO:0000250" key="2">
    <source>
        <dbReference type="UniProtKB" id="P05059"/>
    </source>
</evidence>
<evidence type="ECO:0000250" key="3">
    <source>
        <dbReference type="UniProtKB" id="P10354"/>
    </source>
</evidence>
<evidence type="ECO:0000250" key="4">
    <source>
        <dbReference type="UniProtKB" id="P10645"/>
    </source>
</evidence>
<evidence type="ECO:0000256" key="5">
    <source>
        <dbReference type="SAM" id="MobiDB-lite"/>
    </source>
</evidence>
<evidence type="ECO:0000269" key="6">
    <source>
    </source>
</evidence>
<evidence type="ECO:0000269" key="7">
    <source>
    </source>
</evidence>
<evidence type="ECO:0000269" key="8">
    <source>
    </source>
</evidence>
<evidence type="ECO:0000303" key="9">
    <source>
    </source>
</evidence>
<evidence type="ECO:0000303" key="10">
    <source>
    </source>
</evidence>
<evidence type="ECO:0000305" key="11"/>
<evidence type="ECO:0007744" key="12">
    <source>
    </source>
</evidence>
<comment type="function">
    <molecule>Pancreastatin</molecule>
    <text>Strongly inhibits glucose induced insulin release from the pancreas.</text>
</comment>
<comment type="function">
    <molecule>Catestatin</molecule>
    <text evidence="4">Inhibits catecholamine release from chromaffin cells and noradrenergic neurons by acting as a non-competitive nicotinic cholinergic antagonist. Can induce mast cell migration, degranulation and production of cytokines and chemokines.</text>
</comment>
<comment type="function">
    <molecule>Serpinin</molecule>
    <text evidence="7 8">Regulates granule biogenesis in endocrine cells by up-regulating the transcription of protease nexin 1 (SERPINE2) via a cAMP-PKA-SP1 pathway. This leads to inhibition of granule protein degradation in the Golgi complex which in turn promotes granule formation (PubMed:21436258). Pyroglutaminated (pGlu)-serpinin exerts an antiapoptotic effect on cells exposed to oxidative stress (PubMed:21537909).</text>
</comment>
<comment type="subunit">
    <text evidence="2 4 6">Self-interacts; self-assembly is promoted in vitro by chondroitin sulfate attachment which occurs at mildly acidic pH conditions (By similarity). Interacts with SCG3; this interaction is optimal in conditions mimicking the lumenal milieu of the trans-Golgi network, i.e. pH 5.5 and 10 mM Ca(+2) (PubMed:12388744). Interacts with ITPR1 in the secretory granules (By similarity).</text>
</comment>
<comment type="interaction">
    <interactant intactId="EBI-990900">
        <id>P26339</id>
    </interactant>
    <interactant intactId="EBI-990792">
        <id>P00441</id>
        <label>SOD1</label>
    </interactant>
    <organismsDiffer>true</organismsDiffer>
    <experiments>5</experiments>
</comment>
<comment type="subcellular location">
    <subcellularLocation>
        <location evidence="6">Cytoplasmic vesicle</location>
        <location evidence="6">Secretory vesicle</location>
    </subcellularLocation>
    <subcellularLocation>
        <location evidence="3">Cytoplasmic vesicle</location>
        <location evidence="3">Secretory vesicle</location>
        <location evidence="3">Neuronal dense core vesicle</location>
    </subcellularLocation>
    <subcellularLocation>
        <location evidence="6">Secreted</location>
    </subcellularLocation>
    <text>Associated with the secretory granule membrane through direct interaction to SCG3 that in turn binds to cholesterol-enriched lipid rafts in intragranular conditions.</text>
</comment>
<comment type="subcellular location">
    <molecule>Serpinin</molecule>
    <subcellularLocation>
        <location evidence="7 8">Secreted</location>
    </subcellularLocation>
    <subcellularLocation>
        <location evidence="8">Cytoplasmic vesicle</location>
        <location evidence="8">Secretory vesicle</location>
    </subcellularLocation>
    <text evidence="8">Pyroglutaminated serpinin localizes to secretory vesicle.</text>
</comment>
<comment type="PTM">
    <text evidence="4">O-glycosylated; contains chondroitin sulfate (CS). CS attachment is pH-dependent, being observed at mildly acidic conditions of pH 5 but not at neutral pH, and promotes self-assembly in vitro.</text>
</comment>
<comment type="mass spectrometry">
    <molecule>Serpinin</molecule>
</comment>
<comment type="mass spectrometry">
    <molecule>Serpinin</molecule>
</comment>
<comment type="mass spectrometry">
    <molecule>p-Glu serpinin precursor</molecule>
    <text>With pyrrolidone carboxylic acid at Gln-438.</text>
</comment>
<comment type="miscellaneous">
    <text>Binds calcium with a low-affinity.</text>
</comment>
<comment type="similarity">
    <text evidence="11">Belongs to the chromogranin/secretogranin protein family.</text>
</comment>
<keyword id="KW-0002">3D-structure</keyword>
<keyword id="KW-0027">Amidation</keyword>
<keyword id="KW-0106">Calcium</keyword>
<keyword id="KW-0165">Cleavage on pair of basic residues</keyword>
<keyword id="KW-0968">Cytoplasmic vesicle</keyword>
<keyword id="KW-1015">Disulfide bond</keyword>
<keyword id="KW-0325">Glycoprotein</keyword>
<keyword id="KW-0558">Oxidation</keyword>
<keyword id="KW-0597">Phosphoprotein</keyword>
<keyword id="KW-0654">Proteoglycan</keyword>
<keyword id="KW-0873">Pyrrolidone carboxylic acid</keyword>
<keyword id="KW-1185">Reference proteome</keyword>
<keyword id="KW-0964">Secreted</keyword>
<keyword id="KW-0732">Signal</keyword>
<organism>
    <name type="scientific">Mus musculus</name>
    <name type="common">Mouse</name>
    <dbReference type="NCBI Taxonomy" id="10090"/>
    <lineage>
        <taxon>Eukaryota</taxon>
        <taxon>Metazoa</taxon>
        <taxon>Chordata</taxon>
        <taxon>Craniata</taxon>
        <taxon>Vertebrata</taxon>
        <taxon>Euteleostomi</taxon>
        <taxon>Mammalia</taxon>
        <taxon>Eutheria</taxon>
        <taxon>Euarchontoglires</taxon>
        <taxon>Glires</taxon>
        <taxon>Rodentia</taxon>
        <taxon>Myomorpha</taxon>
        <taxon>Muroidea</taxon>
        <taxon>Muridae</taxon>
        <taxon>Murinae</taxon>
        <taxon>Mus</taxon>
        <taxon>Mus</taxon>
    </lineage>
</organism>
<feature type="signal peptide">
    <location>
        <begin position="1"/>
        <end position="18"/>
    </location>
</feature>
<feature type="chain" id="PRO_0000005422" description="Chromogranin-A">
    <location>
        <begin position="19"/>
        <end position="463"/>
    </location>
</feature>
<feature type="peptide" id="PRO_0000005423" description="Beta-granin" evidence="1">
    <location>
        <begin position="19"/>
        <end position="151"/>
    </location>
</feature>
<feature type="peptide" id="PRO_0000005424" description="Pancreastatin" evidence="1">
    <location>
        <begin position="276"/>
        <end position="329"/>
    </location>
</feature>
<feature type="peptide" id="PRO_0000005425" description="WE-14" evidence="1">
    <location>
        <begin position="358"/>
        <end position="371"/>
    </location>
</feature>
<feature type="peptide" id="PRO_0000432687" description="Catestatin" evidence="4">
    <location>
        <begin position="382"/>
        <end position="402"/>
    </location>
</feature>
<feature type="peptide" id="PRO_0000432688" description="GE-25" evidence="2">
    <location>
        <begin position="405"/>
        <end position="423"/>
    </location>
</feature>
<feature type="peptide" id="PRO_0000432689" description="Serpinin-RRG" evidence="3">
    <location>
        <begin position="435"/>
        <end position="463"/>
    </location>
</feature>
<feature type="peptide" id="PRO_0000432690" description="Serpinin" evidence="7 8">
    <location>
        <begin position="435"/>
        <end position="460"/>
    </location>
</feature>
<feature type="peptide" id="PRO_0000432691" description="p-Glu serpinin precursor" evidence="8">
    <location>
        <begin position="438"/>
        <end position="460"/>
    </location>
</feature>
<feature type="region of interest" description="Disordered" evidence="5">
    <location>
        <begin position="88"/>
        <end position="440"/>
    </location>
</feature>
<feature type="compositionally biased region" description="Low complexity" evidence="5">
    <location>
        <begin position="92"/>
        <end position="116"/>
    </location>
</feature>
<feature type="compositionally biased region" description="Basic and acidic residues" evidence="5">
    <location>
        <begin position="134"/>
        <end position="160"/>
    </location>
</feature>
<feature type="compositionally biased region" description="Polar residues" evidence="5">
    <location>
        <begin position="196"/>
        <end position="208"/>
    </location>
</feature>
<feature type="compositionally biased region" description="Basic and acidic residues" evidence="5">
    <location>
        <begin position="301"/>
        <end position="310"/>
    </location>
</feature>
<feature type="compositionally biased region" description="Basic and acidic residues" evidence="5">
    <location>
        <begin position="331"/>
        <end position="340"/>
    </location>
</feature>
<feature type="compositionally biased region" description="Basic and acidic residues" evidence="5">
    <location>
        <begin position="348"/>
        <end position="375"/>
    </location>
</feature>
<feature type="compositionally biased region" description="Basic and acidic residues" evidence="5">
    <location>
        <begin position="409"/>
        <end position="437"/>
    </location>
</feature>
<feature type="modified residue" description="Phosphoserine" evidence="2">
    <location>
        <position position="119"/>
    </location>
</feature>
<feature type="modified residue" description="Phosphoserine" evidence="4">
    <location>
        <position position="220"/>
    </location>
</feature>
<feature type="modified residue" description="Phosphoserine" evidence="12">
    <location>
        <position position="282"/>
    </location>
</feature>
<feature type="modified residue" description="Phosphoserine" evidence="4">
    <location>
        <position position="308"/>
    </location>
</feature>
<feature type="modified residue" description="Glycine amide" evidence="2">
    <location>
        <position position="329"/>
    </location>
</feature>
<feature type="modified residue" description="Phosphoserine" evidence="4">
    <location>
        <position position="350"/>
    </location>
</feature>
<feature type="modified residue" description="Phosphoserine" evidence="3">
    <location>
        <position position="383"/>
    </location>
</feature>
<feature type="modified residue" description="Methionine sulfoxide" evidence="4">
    <location>
        <position position="384"/>
    </location>
</feature>
<feature type="modified residue" description="Phosphoserine" evidence="2">
    <location>
        <position position="410"/>
    </location>
</feature>
<feature type="modified residue" description="Phosphoserine" evidence="2">
    <location>
        <position position="414"/>
    </location>
</feature>
<feature type="modified residue" description="Phosphoserine" evidence="3">
    <location>
        <position position="430"/>
    </location>
</feature>
<feature type="modified residue" description="Pyrrolidone carboxylic acid" evidence="8">
    <location>
        <position position="438"/>
    </location>
</feature>
<feature type="modified residue" description="Phosphoserine" evidence="3">
    <location>
        <position position="444"/>
    </location>
</feature>
<feature type="glycosylation site" description="O-linked (Xyl...) (chondroitin sulfate) serine" evidence="4">
    <location>
        <position position="430"/>
    </location>
</feature>
<feature type="disulfide bond" evidence="1">
    <location>
        <begin position="35"/>
        <end position="56"/>
    </location>
</feature>
<reference key="1">
    <citation type="journal article" date="1991" name="J. Biol. Chem.">
        <title>Structure and function of the chromogranin A gene. Clues to evolution and tissue-specific expression.</title>
        <authorList>
            <person name="Wu H.J."/>
            <person name="Rozansky D.J."/>
            <person name="Parmer R.J."/>
            <person name="Gill B.M."/>
            <person name="O'Connor D.T."/>
        </authorList>
    </citation>
    <scope>NUCLEOTIDE SEQUENCE [MRNA]</scope>
</reference>
<reference key="2">
    <citation type="journal article" date="2004" name="Genome Res.">
        <title>The status, quality, and expansion of the NIH full-length cDNA project: the Mammalian Gene Collection (MGC).</title>
        <authorList>
            <consortium name="The MGC Project Team"/>
        </authorList>
    </citation>
    <scope>NUCLEOTIDE SEQUENCE [LARGE SCALE MRNA]</scope>
    <source>
        <strain>FVB/N</strain>
        <tissue>Colon</tissue>
    </source>
</reference>
<reference key="3">
    <citation type="journal article" date="2002" name="Mol. Biol. Cell">
        <title>Identification of a chromogranin A domain that mediates binding to secretogranin III and targeting to secretory granules in pituitary cells and pancreatic beta-cells.</title>
        <authorList>
            <person name="Hosaka M."/>
            <person name="Watanabe T."/>
            <person name="Sakai Y."/>
            <person name="Uchiyama Y."/>
            <person name="Takeuchi T."/>
        </authorList>
    </citation>
    <scope>INTERACTION WITH SCG3</scope>
    <scope>SUBCELLULAR LOCATION</scope>
</reference>
<reference key="4">
    <citation type="journal article" date="2010" name="Cell">
        <title>A tissue-specific atlas of mouse protein phosphorylation and expression.</title>
        <authorList>
            <person name="Huttlin E.L."/>
            <person name="Jedrychowski M.P."/>
            <person name="Elias J.E."/>
            <person name="Goswami T."/>
            <person name="Rad R."/>
            <person name="Beausoleil S.A."/>
            <person name="Villen J."/>
            <person name="Haas W."/>
            <person name="Sowa M.E."/>
            <person name="Gygi S.P."/>
        </authorList>
    </citation>
    <scope>PHOSPHORYLATION [LARGE SCALE ANALYSIS] AT SER-282</scope>
    <scope>IDENTIFICATION BY MASS SPECTROMETRY [LARGE SCALE ANALYSIS]</scope>
    <source>
        <tissue>Brain</tissue>
        <tissue>Kidney</tissue>
        <tissue>Pancreas</tissue>
    </source>
</reference>
<reference key="5">
    <citation type="journal article" date="2011" name="J. Mol. Neurosci.">
        <title>Role of pGlu-serpinin, a novel chromogranin A-derived peptide in inhibition of cell death.</title>
        <authorList>
            <person name="Koshimizu H."/>
            <person name="Cawley N.X."/>
            <person name="Yergy A.L."/>
            <person name="Loh Y.P."/>
        </authorList>
    </citation>
    <scope>FUNCTION (SERPININ)</scope>
    <scope>PYROGLUTAMATE FORMATION AT GLN-438</scope>
    <scope>MASS SPECTROMETRY</scope>
    <scope>SUBCELLULAR LOCATION</scope>
</reference>
<reference key="6">
    <citation type="journal article" date="2011" name="Mol. Endocrinol.">
        <title>Serpinin: a novel chromogranin A-derived, secreted peptide up-regulates protease nexin-1 expression and granule biogenesis in endocrine cells.</title>
        <authorList>
            <person name="Koshimizu H."/>
            <person name="Cawley N.X."/>
            <person name="Kim T."/>
            <person name="Yergey A.L."/>
            <person name="Loh Y.P."/>
        </authorList>
    </citation>
    <scope>FUNCTION (SERPININ)</scope>
    <scope>MASS SPECTROMETRY</scope>
    <scope>SUBCELLULAR LOCATION</scope>
</reference>
<dbReference type="EMBL" id="M64278">
    <property type="protein sequence ID" value="AAA37457.1"/>
    <property type="molecule type" value="mRNA"/>
</dbReference>
<dbReference type="EMBL" id="BC026554">
    <property type="protein sequence ID" value="AAH26554.1"/>
    <property type="molecule type" value="mRNA"/>
</dbReference>
<dbReference type="CCDS" id="CCDS26120.1"/>
<dbReference type="PIR" id="A39868">
    <property type="entry name" value="A39868"/>
</dbReference>
<dbReference type="RefSeq" id="NP_031719.1">
    <property type="nucleotide sequence ID" value="NM_007693.2"/>
</dbReference>
<dbReference type="PDB" id="5DMK">
    <property type="method" value="X-ray"/>
    <property type="resolution" value="2.45 A"/>
    <property type="chains" value="B/D/F/H=358-371"/>
</dbReference>
<dbReference type="PDBsum" id="5DMK"/>
<dbReference type="SMR" id="P26339"/>
<dbReference type="BioGRID" id="198696">
    <property type="interactions" value="3"/>
</dbReference>
<dbReference type="FunCoup" id="P26339">
    <property type="interactions" value="128"/>
</dbReference>
<dbReference type="IntAct" id="P26339">
    <property type="interactions" value="3"/>
</dbReference>
<dbReference type="STRING" id="10090.ENSMUSP00000021610"/>
<dbReference type="GlyGen" id="P26339">
    <property type="glycosylation" value="2 sites"/>
</dbReference>
<dbReference type="iPTMnet" id="P26339"/>
<dbReference type="PhosphoSitePlus" id="P26339"/>
<dbReference type="CPTAC" id="non-CPTAC-3903"/>
<dbReference type="jPOST" id="P26339"/>
<dbReference type="PaxDb" id="10090-ENSMUSP00000021610"/>
<dbReference type="PeptideAtlas" id="P26339"/>
<dbReference type="ProteomicsDB" id="279118"/>
<dbReference type="Antibodypedia" id="738">
    <property type="antibodies" value="3071 antibodies from 51 providers"/>
</dbReference>
<dbReference type="DNASU" id="12652"/>
<dbReference type="Ensembl" id="ENSMUST00000021610.7">
    <property type="protein sequence ID" value="ENSMUSP00000021610.6"/>
    <property type="gene ID" value="ENSMUSG00000021194.7"/>
</dbReference>
<dbReference type="GeneID" id="12652"/>
<dbReference type="KEGG" id="mmu:12652"/>
<dbReference type="UCSC" id="uc007oui.1">
    <property type="organism name" value="mouse"/>
</dbReference>
<dbReference type="AGR" id="MGI:88394"/>
<dbReference type="CTD" id="1113"/>
<dbReference type="MGI" id="MGI:88394">
    <property type="gene designation" value="Chga"/>
</dbReference>
<dbReference type="VEuPathDB" id="HostDB:ENSMUSG00000021194"/>
<dbReference type="eggNOG" id="ENOG502RZBD">
    <property type="taxonomic scope" value="Eukaryota"/>
</dbReference>
<dbReference type="GeneTree" id="ENSGT00940000154206"/>
<dbReference type="HOGENOM" id="CLU_050861_0_0_1"/>
<dbReference type="InParanoid" id="P26339"/>
<dbReference type="OMA" id="KVMTCIA"/>
<dbReference type="OrthoDB" id="9948620at2759"/>
<dbReference type="PhylomeDB" id="P26339"/>
<dbReference type="TreeFam" id="TF336596"/>
<dbReference type="Reactome" id="R-MMU-6803157">
    <property type="pathway name" value="Antimicrobial peptides"/>
</dbReference>
<dbReference type="BioGRID-ORCS" id="12652">
    <property type="hits" value="0 hits in 78 CRISPR screens"/>
</dbReference>
<dbReference type="CD-CODE" id="A6D16FCC">
    <property type="entry name" value="Chromogranin condensates"/>
</dbReference>
<dbReference type="ChiTaRS" id="Chga">
    <property type="organism name" value="mouse"/>
</dbReference>
<dbReference type="PRO" id="PR:P26339"/>
<dbReference type="Proteomes" id="UP000000589">
    <property type="component" value="Chromosome 12"/>
</dbReference>
<dbReference type="RNAct" id="P26339">
    <property type="molecule type" value="protein"/>
</dbReference>
<dbReference type="Bgee" id="ENSMUSG00000021194">
    <property type="expression patterns" value="Expressed in islet of Langerhans and 152 other cell types or tissues"/>
</dbReference>
<dbReference type="GO" id="GO:0042583">
    <property type="term" value="C:chromaffin granule"/>
    <property type="evidence" value="ECO:0000250"/>
    <property type="project" value="BHF-UCL"/>
</dbReference>
<dbReference type="GO" id="GO:0005615">
    <property type="term" value="C:extracellular space"/>
    <property type="evidence" value="ECO:0000250"/>
    <property type="project" value="BHF-UCL"/>
</dbReference>
<dbReference type="GO" id="GO:0098992">
    <property type="term" value="C:neuronal dense core vesicle"/>
    <property type="evidence" value="ECO:0000250"/>
    <property type="project" value="UniProtKB"/>
</dbReference>
<dbReference type="GO" id="GO:0048471">
    <property type="term" value="C:perinuclear region of cytoplasm"/>
    <property type="evidence" value="ECO:0007669"/>
    <property type="project" value="Ensembl"/>
</dbReference>
<dbReference type="GO" id="GO:0030141">
    <property type="term" value="C:secretory granule"/>
    <property type="evidence" value="ECO:0000250"/>
    <property type="project" value="UniProtKB"/>
</dbReference>
<dbReference type="GO" id="GO:0030133">
    <property type="term" value="C:transport vesicle"/>
    <property type="evidence" value="ECO:0007669"/>
    <property type="project" value="UniProtKB-SubCell"/>
</dbReference>
<dbReference type="GO" id="GO:0050829">
    <property type="term" value="P:defense response to Gram-negative bacterium"/>
    <property type="evidence" value="ECO:0000250"/>
    <property type="project" value="UniProtKB"/>
</dbReference>
<dbReference type="GO" id="GO:0050830">
    <property type="term" value="P:defense response to Gram-positive bacterium"/>
    <property type="evidence" value="ECO:0000250"/>
    <property type="project" value="UniProtKB"/>
</dbReference>
<dbReference type="GO" id="GO:0045576">
    <property type="term" value="P:mast cell activation"/>
    <property type="evidence" value="ECO:0000250"/>
    <property type="project" value="UniProtKB"/>
</dbReference>
<dbReference type="GO" id="GO:0002551">
    <property type="term" value="P:mast cell chemotaxis"/>
    <property type="evidence" value="ECO:0000250"/>
    <property type="project" value="UniProtKB"/>
</dbReference>
<dbReference type="GO" id="GO:0043303">
    <property type="term" value="P:mast cell degranulation"/>
    <property type="evidence" value="ECO:0000250"/>
    <property type="project" value="UniProtKB"/>
</dbReference>
<dbReference type="GO" id="GO:0033604">
    <property type="term" value="P:negative regulation of catecholamine secretion"/>
    <property type="evidence" value="ECO:0000250"/>
    <property type="project" value="UniProtKB"/>
</dbReference>
<dbReference type="GO" id="GO:0060452">
    <property type="term" value="P:positive regulation of cardiac muscle contraction"/>
    <property type="evidence" value="ECO:0000250"/>
    <property type="project" value="BHF-UCL"/>
</dbReference>
<dbReference type="GO" id="GO:2000707">
    <property type="term" value="P:positive regulation of dense core granule biogenesis"/>
    <property type="evidence" value="ECO:0000314"/>
    <property type="project" value="UniProtKB"/>
</dbReference>
<dbReference type="GO" id="GO:1900738">
    <property type="term" value="P:positive regulation of phospholipase C-activating G protein-coupled receptor signaling pathway"/>
    <property type="evidence" value="ECO:0000250"/>
    <property type="project" value="BHF-UCL"/>
</dbReference>
<dbReference type="GO" id="GO:1901899">
    <property type="term" value="P:positive regulation of relaxation of cardiac muscle"/>
    <property type="evidence" value="ECO:0000250"/>
    <property type="project" value="BHF-UCL"/>
</dbReference>
<dbReference type="GO" id="GO:0033366">
    <property type="term" value="P:protein localization to secretory granule"/>
    <property type="evidence" value="ECO:0000314"/>
    <property type="project" value="MGI"/>
</dbReference>
<dbReference type="GO" id="GO:0002026">
    <property type="term" value="P:regulation of the force of heart contraction"/>
    <property type="evidence" value="ECO:0000250"/>
    <property type="project" value="BHF-UCL"/>
</dbReference>
<dbReference type="InterPro" id="IPR001819">
    <property type="entry name" value="Chromogranin_AB"/>
</dbReference>
<dbReference type="InterPro" id="IPR018054">
    <property type="entry name" value="Chromogranin_CS"/>
</dbReference>
<dbReference type="InterPro" id="IPR001990">
    <property type="entry name" value="Granin"/>
</dbReference>
<dbReference type="PANTHER" id="PTHR10583">
    <property type="entry name" value="CHROMOGRANIN"/>
    <property type="match status" value="1"/>
</dbReference>
<dbReference type="PANTHER" id="PTHR10583:SF1">
    <property type="entry name" value="CHROMOGRANIN-A"/>
    <property type="match status" value="1"/>
</dbReference>
<dbReference type="Pfam" id="PF01271">
    <property type="entry name" value="Granin"/>
    <property type="match status" value="2"/>
</dbReference>
<dbReference type="PRINTS" id="PR00659">
    <property type="entry name" value="CHROMOGRANIN"/>
</dbReference>
<dbReference type="PROSITE" id="PS00422">
    <property type="entry name" value="GRANINS_1"/>
    <property type="match status" value="1"/>
</dbReference>
<dbReference type="PROSITE" id="PS00423">
    <property type="entry name" value="GRANINS_2"/>
    <property type="match status" value="1"/>
</dbReference>
<accession>P26339</accession>
<sequence>MRSTAVLALLLCAGQVFALPVNSPMTKGDTKVMKCVLEVISDSLSKPSPMPVSPECLETLQGDERILSILRHQNLLKELQDLALQGAKERAQQPLKQQQPPKQQQQQQQQQQQEQQHSSFEDELSEVFENQSPDAKHRDAAAEVPSRDTMEKRKDSDKGQQDGFEATTEGPRPQAFPEPNQESPMMGDSESPGEDTATNTQSPTSLPSQEHVDPQATGDSERGLSAQQQARKAKQEEKEEEEEEEAVAREKAGPEEVPTAASSSHFHAGYKAIQKDDGQSDSQAVDGDGKTEASEALPSEGKGELEHSQQEEDGEEAMVGTPQGLFPQGGKGRELEHKQEEEEEEEERLSREWEDKRWSRMDQLAKELTAEKRLEGEDDPDRSMKLSFRTRAYGFRDPGPQLRRGWRPSSREDSVEARSDFEEKKEEEGSANRRAEDQELESLSAIEAELEKVAHQLQALRRG</sequence>
<protein>
    <recommendedName>
        <fullName>Chromogranin-A</fullName>
        <shortName>CgA</shortName>
    </recommendedName>
    <component>
        <recommendedName>
            <fullName>Pancreastatin</fullName>
        </recommendedName>
    </component>
    <component>
        <recommendedName>
            <fullName>Beta-granin</fullName>
        </recommendedName>
    </component>
    <component>
        <recommendedName>
            <fullName>WE-14</fullName>
        </recommendedName>
    </component>
    <component>
        <recommendedName>
            <fullName>Catestatin</fullName>
        </recommendedName>
    </component>
    <component>
        <recommendedName>
            <fullName>GE-25</fullName>
        </recommendedName>
    </component>
    <component>
        <recommendedName>
            <fullName>Serpinin-RRG</fullName>
        </recommendedName>
    </component>
    <component>
        <recommendedName>
            <fullName evidence="9 10">Serpinin</fullName>
        </recommendedName>
        <alternativeName>
            <fullName evidence="9">AL26</fullName>
        </alternativeName>
    </component>
    <component>
        <recommendedName>
            <fullName evidence="10">p-Glu serpinin precursor</fullName>
        </recommendedName>
    </component>
</protein>
<name>CMGA_MOUSE</name>
<gene>
    <name type="primary">Chga</name>
</gene>